<proteinExistence type="inferred from homology"/>
<feature type="chain" id="PRO_0000225342" description="NAD(P)H-quinone oxidoreductase subunit 2 A, chloroplastic">
    <location>
        <begin position="1"/>
        <end position="510"/>
    </location>
</feature>
<feature type="transmembrane region" description="Helical" evidence="1">
    <location>
        <begin position="24"/>
        <end position="44"/>
    </location>
</feature>
<feature type="transmembrane region" description="Helical" evidence="1">
    <location>
        <begin position="57"/>
        <end position="77"/>
    </location>
</feature>
<feature type="transmembrane region" description="Helical" evidence="1">
    <location>
        <begin position="99"/>
        <end position="119"/>
    </location>
</feature>
<feature type="transmembrane region" description="Helical" evidence="1">
    <location>
        <begin position="124"/>
        <end position="144"/>
    </location>
</feature>
<feature type="transmembrane region" description="Helical" evidence="1">
    <location>
        <begin position="149"/>
        <end position="169"/>
    </location>
</feature>
<feature type="transmembrane region" description="Helical" evidence="1">
    <location>
        <begin position="183"/>
        <end position="203"/>
    </location>
</feature>
<feature type="transmembrane region" description="Helical" evidence="1">
    <location>
        <begin position="227"/>
        <end position="247"/>
    </location>
</feature>
<feature type="transmembrane region" description="Helical" evidence="1">
    <location>
        <begin position="295"/>
        <end position="315"/>
    </location>
</feature>
<feature type="transmembrane region" description="Helical" evidence="1">
    <location>
        <begin position="323"/>
        <end position="343"/>
    </location>
</feature>
<feature type="transmembrane region" description="Helical" evidence="1">
    <location>
        <begin position="347"/>
        <end position="367"/>
    </location>
</feature>
<feature type="transmembrane region" description="Helical" evidence="1">
    <location>
        <begin position="395"/>
        <end position="415"/>
    </location>
</feature>
<feature type="transmembrane region" description="Helical" evidence="1">
    <location>
        <begin position="418"/>
        <end position="438"/>
    </location>
</feature>
<feature type="transmembrane region" description="Helical" evidence="1">
    <location>
        <begin position="482"/>
        <end position="502"/>
    </location>
</feature>
<organism>
    <name type="scientific">Cucumis sativus</name>
    <name type="common">Cucumber</name>
    <dbReference type="NCBI Taxonomy" id="3659"/>
    <lineage>
        <taxon>Eukaryota</taxon>
        <taxon>Viridiplantae</taxon>
        <taxon>Streptophyta</taxon>
        <taxon>Embryophyta</taxon>
        <taxon>Tracheophyta</taxon>
        <taxon>Spermatophyta</taxon>
        <taxon>Magnoliopsida</taxon>
        <taxon>eudicotyledons</taxon>
        <taxon>Gunneridae</taxon>
        <taxon>Pentapetalae</taxon>
        <taxon>rosids</taxon>
        <taxon>fabids</taxon>
        <taxon>Cucurbitales</taxon>
        <taxon>Cucurbitaceae</taxon>
        <taxon>Benincaseae</taxon>
        <taxon>Cucumis</taxon>
    </lineage>
</organism>
<geneLocation type="chloroplast"/>
<protein>
    <recommendedName>
        <fullName evidence="1">NAD(P)H-quinone oxidoreductase subunit 2 A, chloroplastic</fullName>
        <ecNumber evidence="1">7.1.1.-</ecNumber>
    </recommendedName>
    <alternativeName>
        <fullName evidence="1">NAD(P)H dehydrogenase, subunit 2 A</fullName>
    </alternativeName>
    <alternativeName>
        <fullName evidence="1">NADH-plastoquinone oxidoreductase subunit 2 A</fullName>
    </alternativeName>
</protein>
<sequence>MIWHVQNENFILDSTRIFMKAFHLLLFDGSFIFPECILIFGLILLLMIDSTSDQKDIPWLYFISSTSLVMSITALLFRWREEPMISFSGNFQTNNFNEIFQFLILLCSTLCIPLSVEYIECTEMAITEFLLFVLTATLGGMFLCGANDLITIFVAPECFSLCSYLLSGYTKKDVRSNEATTKYLLMGGASSSILVHGFSWLYGSSGGEIELQEIVNGLLNTQMYNSPGISIALIFITVGIGFKLSPAPSHQWTPDVYEGSPTPVVAFLSVTSKVAASASATRIFDIPFYFSSNEWHLLLEILAILSMILGNLIAITQTSMKRMLAYSSIGQIGYVIIGIIVGDSNGGYASMITYMLFYIAMNLGTFARIVSFGLRTGTDNIRDYAGLYTKDPLLALSLALCLLSLGGLPPLAGFFGKLHLFWCGWQAGLYFLVSIGLLTSVVSIYYYLKIIKLLMTGRNQEITPHVRNYRRSPLRSNNSIELSMIVCVIASTIPGISMNPIIEIAQDTLF</sequence>
<evidence type="ECO:0000255" key="1">
    <source>
        <dbReference type="HAMAP-Rule" id="MF_00445"/>
    </source>
</evidence>
<reference key="1">
    <citation type="journal article" date="2006" name="Plant Cell Rep.">
        <title>Complete sequence and organization of the cucumber (Cucumis sativus L. cv. Baekmibaekdadagi) chloroplast genome.</title>
        <authorList>
            <person name="Kim J.-S."/>
            <person name="Jung J.D."/>
            <person name="Lee J.-A."/>
            <person name="Park H.-W."/>
            <person name="Oh K.-H."/>
            <person name="Jeong W.J."/>
            <person name="Choi D.-W."/>
            <person name="Liu J.R."/>
            <person name="Cho K.Y."/>
        </authorList>
    </citation>
    <scope>NUCLEOTIDE SEQUENCE [LARGE SCALE GENOMIC DNA]</scope>
    <source>
        <strain>cv. Baekmibaekdadagi</strain>
    </source>
</reference>
<reference key="2">
    <citation type="journal article" date="2007" name="Cell. Mol. Biol. Lett.">
        <title>The complete structure of the cucumber (Cucumis sativus L.) chloroplast genome: its composition and comparative analysis.</title>
        <authorList>
            <person name="Plader W.W."/>
            <person name="Yukawa Y."/>
            <person name="Sugiura M."/>
            <person name="Malepszy S."/>
        </authorList>
    </citation>
    <scope>NUCLEOTIDE SEQUENCE [LARGE SCALE GENOMIC DNA]</scope>
    <source>
        <strain>cv. Borszczagowski</strain>
    </source>
</reference>
<reference key="3">
    <citation type="journal article" date="2007" name="Genome">
        <title>Sequencing cucumber (Cucumis sativus L.) chloroplast genomes identifies differences between chilling-tolerant and -susceptible cucumber lines.</title>
        <authorList>
            <person name="Chung S.-M."/>
            <person name="Gordon V.S."/>
            <person name="Staub J.E."/>
        </authorList>
    </citation>
    <scope>NUCLEOTIDE SEQUENCE [LARGE SCALE GENOMIC DNA]</scope>
    <source>
        <strain>cv. Chipper</strain>
        <strain>cv. Gy14</strain>
    </source>
</reference>
<comment type="function">
    <text evidence="1">NDH shuttles electrons from NAD(P)H:plastoquinone, via FMN and iron-sulfur (Fe-S) centers, to quinones in the photosynthetic chain and possibly in a chloroplast respiratory chain. The immediate electron acceptor for the enzyme in this species is believed to be plastoquinone. Couples the redox reaction to proton translocation, and thus conserves the redox energy in a proton gradient.</text>
</comment>
<comment type="catalytic activity">
    <reaction evidence="1">
        <text>a plastoquinone + NADH + (n+1) H(+)(in) = a plastoquinol + NAD(+) + n H(+)(out)</text>
        <dbReference type="Rhea" id="RHEA:42608"/>
        <dbReference type="Rhea" id="RHEA-COMP:9561"/>
        <dbReference type="Rhea" id="RHEA-COMP:9562"/>
        <dbReference type="ChEBI" id="CHEBI:15378"/>
        <dbReference type="ChEBI" id="CHEBI:17757"/>
        <dbReference type="ChEBI" id="CHEBI:57540"/>
        <dbReference type="ChEBI" id="CHEBI:57945"/>
        <dbReference type="ChEBI" id="CHEBI:62192"/>
    </reaction>
</comment>
<comment type="catalytic activity">
    <reaction evidence="1">
        <text>a plastoquinone + NADPH + (n+1) H(+)(in) = a plastoquinol + NADP(+) + n H(+)(out)</text>
        <dbReference type="Rhea" id="RHEA:42612"/>
        <dbReference type="Rhea" id="RHEA-COMP:9561"/>
        <dbReference type="Rhea" id="RHEA-COMP:9562"/>
        <dbReference type="ChEBI" id="CHEBI:15378"/>
        <dbReference type="ChEBI" id="CHEBI:17757"/>
        <dbReference type="ChEBI" id="CHEBI:57783"/>
        <dbReference type="ChEBI" id="CHEBI:58349"/>
        <dbReference type="ChEBI" id="CHEBI:62192"/>
    </reaction>
</comment>
<comment type="subunit">
    <text evidence="1">NDH is composed of at least 16 different subunits, 5 of which are encoded in the nucleus.</text>
</comment>
<comment type="subcellular location">
    <subcellularLocation>
        <location evidence="1">Plastid</location>
        <location evidence="1">Chloroplast thylakoid membrane</location>
        <topology evidence="1">Multi-pass membrane protein</topology>
    </subcellularLocation>
</comment>
<comment type="similarity">
    <text evidence="1">Belongs to the complex I subunit 2 family.</text>
</comment>
<keyword id="KW-0150">Chloroplast</keyword>
<keyword id="KW-0472">Membrane</keyword>
<keyword id="KW-0520">NAD</keyword>
<keyword id="KW-0521">NADP</keyword>
<keyword id="KW-0934">Plastid</keyword>
<keyword id="KW-0618">Plastoquinone</keyword>
<keyword id="KW-0874">Quinone</keyword>
<keyword id="KW-0793">Thylakoid</keyword>
<keyword id="KW-1278">Translocase</keyword>
<keyword id="KW-0812">Transmembrane</keyword>
<keyword id="KW-1133">Transmembrane helix</keyword>
<keyword id="KW-0813">Transport</keyword>
<name>NU2C1_CUCSA</name>
<dbReference type="EC" id="7.1.1.-" evidence="1"/>
<dbReference type="EMBL" id="DQ119058">
    <property type="protein sequence ID" value="AAZ94694.1"/>
    <property type="molecule type" value="Genomic_DNA"/>
</dbReference>
<dbReference type="EMBL" id="AJ970307">
    <property type="protein sequence ID" value="CAJ00803.1"/>
    <property type="molecule type" value="Genomic_DNA"/>
</dbReference>
<dbReference type="EMBL" id="DQ865975">
    <property type="protein sequence ID" value="ABI97474.1"/>
    <property type="molecule type" value="Genomic_DNA"/>
</dbReference>
<dbReference type="EMBL" id="DQ865976">
    <property type="protein sequence ID" value="ABI98790.1"/>
    <property type="molecule type" value="Genomic_DNA"/>
</dbReference>
<dbReference type="SMR" id="P0CC50"/>
<dbReference type="KEGG" id="csv:3429253"/>
<dbReference type="KEGG" id="csv:3429254"/>
<dbReference type="OrthoDB" id="1876953at2759"/>
<dbReference type="GO" id="GO:0009535">
    <property type="term" value="C:chloroplast thylakoid membrane"/>
    <property type="evidence" value="ECO:0007669"/>
    <property type="project" value="UniProtKB-SubCell"/>
</dbReference>
<dbReference type="GO" id="GO:0008137">
    <property type="term" value="F:NADH dehydrogenase (ubiquinone) activity"/>
    <property type="evidence" value="ECO:0007669"/>
    <property type="project" value="InterPro"/>
</dbReference>
<dbReference type="GO" id="GO:0048038">
    <property type="term" value="F:quinone binding"/>
    <property type="evidence" value="ECO:0007669"/>
    <property type="project" value="UniProtKB-KW"/>
</dbReference>
<dbReference type="GO" id="GO:0042773">
    <property type="term" value="P:ATP synthesis coupled electron transport"/>
    <property type="evidence" value="ECO:0007669"/>
    <property type="project" value="InterPro"/>
</dbReference>
<dbReference type="GO" id="GO:0019684">
    <property type="term" value="P:photosynthesis, light reaction"/>
    <property type="evidence" value="ECO:0007669"/>
    <property type="project" value="UniProtKB-UniRule"/>
</dbReference>
<dbReference type="HAMAP" id="MF_00445">
    <property type="entry name" value="NDH1_NuoN_1"/>
    <property type="match status" value="1"/>
</dbReference>
<dbReference type="InterPro" id="IPR010096">
    <property type="entry name" value="NADH-Q_OxRdtase_suN/2"/>
</dbReference>
<dbReference type="InterPro" id="IPR001750">
    <property type="entry name" value="ND/Mrp_TM"/>
</dbReference>
<dbReference type="InterPro" id="IPR045693">
    <property type="entry name" value="Ndh2_N"/>
</dbReference>
<dbReference type="NCBIfam" id="TIGR01770">
    <property type="entry name" value="NDH_I_N"/>
    <property type="match status" value="1"/>
</dbReference>
<dbReference type="NCBIfam" id="NF002701">
    <property type="entry name" value="PRK02504.1"/>
    <property type="match status" value="1"/>
</dbReference>
<dbReference type="PANTHER" id="PTHR22773">
    <property type="entry name" value="NADH DEHYDROGENASE"/>
    <property type="match status" value="1"/>
</dbReference>
<dbReference type="Pfam" id="PF19530">
    <property type="entry name" value="Ndh2_N"/>
    <property type="match status" value="1"/>
</dbReference>
<dbReference type="Pfam" id="PF00361">
    <property type="entry name" value="Proton_antipo_M"/>
    <property type="match status" value="1"/>
</dbReference>
<dbReference type="PRINTS" id="PR01434">
    <property type="entry name" value="NADHDHGNASE5"/>
</dbReference>
<accession>P0CC50</accession>
<accession>A5J1X9</accession>
<accession>Q4VZK8</accession>
<gene>
    <name evidence="1" type="primary">ndhB1</name>
    <name type="synonym">ndhB-A</name>
    <name type="ordered locus">CsCp088</name>
</gene>